<reference key="1">
    <citation type="journal article" date="2003" name="Lancet">
        <title>Genome sequence of Vibrio parahaemolyticus: a pathogenic mechanism distinct from that of V. cholerae.</title>
        <authorList>
            <person name="Makino K."/>
            <person name="Oshima K."/>
            <person name="Kurokawa K."/>
            <person name="Yokoyama K."/>
            <person name="Uda T."/>
            <person name="Tagomori K."/>
            <person name="Iijima Y."/>
            <person name="Najima M."/>
            <person name="Nakano M."/>
            <person name="Yamashita A."/>
            <person name="Kubota Y."/>
            <person name="Kimura S."/>
            <person name="Yasunaga T."/>
            <person name="Honda T."/>
            <person name="Shinagawa H."/>
            <person name="Hattori M."/>
            <person name="Iida T."/>
        </authorList>
    </citation>
    <scope>NUCLEOTIDE SEQUENCE [LARGE SCALE GENOMIC DNA]</scope>
    <source>
        <strain>RIMD 2210633</strain>
    </source>
</reference>
<gene>
    <name evidence="1" type="primary">rpsP</name>
    <name type="ordered locus">VP2533</name>
</gene>
<proteinExistence type="inferred from homology"/>
<evidence type="ECO:0000255" key="1">
    <source>
        <dbReference type="HAMAP-Rule" id="MF_00385"/>
    </source>
</evidence>
<evidence type="ECO:0000305" key="2"/>
<keyword id="KW-0687">Ribonucleoprotein</keyword>
<keyword id="KW-0689">Ribosomal protein</keyword>
<sequence length="82" mass="9063">MVTIRLARHGAKKRPFYQIVVADSRNAATGRFIEKVGFFNPTAKGQEEGLRLDLDRVNHWVGQGASVSDRVAKLVKDAQKAA</sequence>
<accession>Q87LS8</accession>
<protein>
    <recommendedName>
        <fullName evidence="1">Small ribosomal subunit protein bS16</fullName>
    </recommendedName>
    <alternativeName>
        <fullName evidence="2">30S ribosomal protein S16</fullName>
    </alternativeName>
</protein>
<dbReference type="EMBL" id="BA000031">
    <property type="protein sequence ID" value="BAC60796.1"/>
    <property type="molecule type" value="Genomic_DNA"/>
</dbReference>
<dbReference type="RefSeq" id="NP_798912.1">
    <property type="nucleotide sequence ID" value="NC_004603.1"/>
</dbReference>
<dbReference type="RefSeq" id="WP_005379962.1">
    <property type="nucleotide sequence ID" value="NC_004603.1"/>
</dbReference>
<dbReference type="SMR" id="Q87LS8"/>
<dbReference type="GeneID" id="75166684"/>
<dbReference type="KEGG" id="vpa:VP2533"/>
<dbReference type="PATRIC" id="fig|223926.6.peg.2430"/>
<dbReference type="eggNOG" id="COG0228">
    <property type="taxonomic scope" value="Bacteria"/>
</dbReference>
<dbReference type="HOGENOM" id="CLU_100590_5_1_6"/>
<dbReference type="Proteomes" id="UP000002493">
    <property type="component" value="Chromosome 1"/>
</dbReference>
<dbReference type="GO" id="GO:0005737">
    <property type="term" value="C:cytoplasm"/>
    <property type="evidence" value="ECO:0007669"/>
    <property type="project" value="UniProtKB-ARBA"/>
</dbReference>
<dbReference type="GO" id="GO:0015935">
    <property type="term" value="C:small ribosomal subunit"/>
    <property type="evidence" value="ECO:0007669"/>
    <property type="project" value="TreeGrafter"/>
</dbReference>
<dbReference type="GO" id="GO:0003735">
    <property type="term" value="F:structural constituent of ribosome"/>
    <property type="evidence" value="ECO:0007669"/>
    <property type="project" value="InterPro"/>
</dbReference>
<dbReference type="GO" id="GO:0006412">
    <property type="term" value="P:translation"/>
    <property type="evidence" value="ECO:0007669"/>
    <property type="project" value="UniProtKB-UniRule"/>
</dbReference>
<dbReference type="FunFam" id="3.30.1320.10:FF:000001">
    <property type="entry name" value="30S ribosomal protein S16"/>
    <property type="match status" value="1"/>
</dbReference>
<dbReference type="Gene3D" id="3.30.1320.10">
    <property type="match status" value="1"/>
</dbReference>
<dbReference type="HAMAP" id="MF_00385">
    <property type="entry name" value="Ribosomal_bS16"/>
    <property type="match status" value="1"/>
</dbReference>
<dbReference type="InterPro" id="IPR000307">
    <property type="entry name" value="Ribosomal_bS16"/>
</dbReference>
<dbReference type="InterPro" id="IPR020592">
    <property type="entry name" value="Ribosomal_bS16_CS"/>
</dbReference>
<dbReference type="InterPro" id="IPR023803">
    <property type="entry name" value="Ribosomal_bS16_dom_sf"/>
</dbReference>
<dbReference type="NCBIfam" id="TIGR00002">
    <property type="entry name" value="S16"/>
    <property type="match status" value="1"/>
</dbReference>
<dbReference type="PANTHER" id="PTHR12919">
    <property type="entry name" value="30S RIBOSOMAL PROTEIN S16"/>
    <property type="match status" value="1"/>
</dbReference>
<dbReference type="PANTHER" id="PTHR12919:SF20">
    <property type="entry name" value="SMALL RIBOSOMAL SUBUNIT PROTEIN BS16M"/>
    <property type="match status" value="1"/>
</dbReference>
<dbReference type="Pfam" id="PF00886">
    <property type="entry name" value="Ribosomal_S16"/>
    <property type="match status" value="1"/>
</dbReference>
<dbReference type="SUPFAM" id="SSF54565">
    <property type="entry name" value="Ribosomal protein S16"/>
    <property type="match status" value="1"/>
</dbReference>
<dbReference type="PROSITE" id="PS00732">
    <property type="entry name" value="RIBOSOMAL_S16"/>
    <property type="match status" value="1"/>
</dbReference>
<feature type="chain" id="PRO_0000167279" description="Small ribosomal subunit protein bS16">
    <location>
        <begin position="1"/>
        <end position="82"/>
    </location>
</feature>
<name>RS16_VIBPA</name>
<organism>
    <name type="scientific">Vibrio parahaemolyticus serotype O3:K6 (strain RIMD 2210633)</name>
    <dbReference type="NCBI Taxonomy" id="223926"/>
    <lineage>
        <taxon>Bacteria</taxon>
        <taxon>Pseudomonadati</taxon>
        <taxon>Pseudomonadota</taxon>
        <taxon>Gammaproteobacteria</taxon>
        <taxon>Vibrionales</taxon>
        <taxon>Vibrionaceae</taxon>
        <taxon>Vibrio</taxon>
    </lineage>
</organism>
<comment type="similarity">
    <text evidence="1">Belongs to the bacterial ribosomal protein bS16 family.</text>
</comment>